<sequence>MEALKKIAGVTAAQYVTDGMTIGLGTGSTAYYFVEEIGRRVKQEGLQVVGVTTSSVTSKQAEGLGIPLKSIDDIDSIDLTVDGADEVDKDFNGIKGGGAALLMEKIVATPTKEYIWVVDASKMVEHLGAFKLPVEVVQYGADRLFRVFEKAGYKPSFRMKGDSRLVTDMQNYIIDLDLGCIKDPVAFGHLLDGTVGVVEHGLFNGMVDKVIVASKDGVTVLEAPKAG</sequence>
<dbReference type="EC" id="5.3.1.6" evidence="1"/>
<dbReference type="EMBL" id="AM295007">
    <property type="protein sequence ID" value="CAM30439.1"/>
    <property type="molecule type" value="Genomic_DNA"/>
</dbReference>
<dbReference type="RefSeq" id="WP_009881270.1">
    <property type="nucleotide sequence ID" value="NC_009332.1"/>
</dbReference>
<dbReference type="SMR" id="A2RF13"/>
<dbReference type="KEGG" id="spf:SpyM51113"/>
<dbReference type="HOGENOM" id="CLU_056590_1_0_9"/>
<dbReference type="UniPathway" id="UPA00115">
    <property type="reaction ID" value="UER00412"/>
</dbReference>
<dbReference type="GO" id="GO:0004751">
    <property type="term" value="F:ribose-5-phosphate isomerase activity"/>
    <property type="evidence" value="ECO:0007669"/>
    <property type="project" value="UniProtKB-UniRule"/>
</dbReference>
<dbReference type="GO" id="GO:0009052">
    <property type="term" value="P:pentose-phosphate shunt, non-oxidative branch"/>
    <property type="evidence" value="ECO:0007669"/>
    <property type="project" value="UniProtKB-UniRule"/>
</dbReference>
<dbReference type="CDD" id="cd01398">
    <property type="entry name" value="RPI_A"/>
    <property type="match status" value="1"/>
</dbReference>
<dbReference type="FunFam" id="3.40.50.1360:FF:000001">
    <property type="entry name" value="Ribose-5-phosphate isomerase A"/>
    <property type="match status" value="1"/>
</dbReference>
<dbReference type="Gene3D" id="3.30.70.260">
    <property type="match status" value="1"/>
</dbReference>
<dbReference type="Gene3D" id="3.40.50.1360">
    <property type="match status" value="1"/>
</dbReference>
<dbReference type="HAMAP" id="MF_00170">
    <property type="entry name" value="Rib_5P_isom_A"/>
    <property type="match status" value="1"/>
</dbReference>
<dbReference type="InterPro" id="IPR037171">
    <property type="entry name" value="NagB/RpiA_transferase-like"/>
</dbReference>
<dbReference type="InterPro" id="IPR050262">
    <property type="entry name" value="Ribose-5P_isomerase"/>
</dbReference>
<dbReference type="InterPro" id="IPR020672">
    <property type="entry name" value="Ribose5P_isomerase_typA_subgr"/>
</dbReference>
<dbReference type="InterPro" id="IPR004788">
    <property type="entry name" value="Ribose5P_isomerase_type_A"/>
</dbReference>
<dbReference type="NCBIfam" id="NF001924">
    <property type="entry name" value="PRK00702.1"/>
    <property type="match status" value="1"/>
</dbReference>
<dbReference type="NCBIfam" id="TIGR00021">
    <property type="entry name" value="rpiA"/>
    <property type="match status" value="1"/>
</dbReference>
<dbReference type="PANTHER" id="PTHR43748">
    <property type="entry name" value="RIBOSE-5-PHOSPHATE ISOMERASE 3, CHLOROPLASTIC-RELATED"/>
    <property type="match status" value="1"/>
</dbReference>
<dbReference type="PANTHER" id="PTHR43748:SF3">
    <property type="entry name" value="RIBOSE-5-PHOSPHATE ISOMERASE 3, CHLOROPLASTIC-RELATED"/>
    <property type="match status" value="1"/>
</dbReference>
<dbReference type="Pfam" id="PF06026">
    <property type="entry name" value="Rib_5-P_isom_A"/>
    <property type="match status" value="1"/>
</dbReference>
<dbReference type="SUPFAM" id="SSF75445">
    <property type="entry name" value="D-ribose-5-phosphate isomerase (RpiA), lid domain"/>
    <property type="match status" value="1"/>
</dbReference>
<dbReference type="SUPFAM" id="SSF100950">
    <property type="entry name" value="NagB/RpiA/CoA transferase-like"/>
    <property type="match status" value="1"/>
</dbReference>
<gene>
    <name evidence="1" type="primary">rpiA</name>
    <name type="ordered locus">SpyM51113</name>
</gene>
<reference key="1">
    <citation type="journal article" date="2007" name="J. Bacteriol.">
        <title>Complete genome of acute rheumatic fever-associated serotype M5 Streptococcus pyogenes strain Manfredo.</title>
        <authorList>
            <person name="Holden M.T.G."/>
            <person name="Scott A."/>
            <person name="Cherevach I."/>
            <person name="Chillingworth T."/>
            <person name="Churcher C."/>
            <person name="Cronin A."/>
            <person name="Dowd L."/>
            <person name="Feltwell T."/>
            <person name="Hamlin N."/>
            <person name="Holroyd S."/>
            <person name="Jagels K."/>
            <person name="Moule S."/>
            <person name="Mungall K."/>
            <person name="Quail M.A."/>
            <person name="Price C."/>
            <person name="Rabbinowitsch E."/>
            <person name="Sharp S."/>
            <person name="Skelton J."/>
            <person name="Whitehead S."/>
            <person name="Barrell B.G."/>
            <person name="Kehoe M."/>
            <person name="Parkhill J."/>
        </authorList>
    </citation>
    <scope>NUCLEOTIDE SEQUENCE [LARGE SCALE GENOMIC DNA]</scope>
    <source>
        <strain>Manfredo</strain>
    </source>
</reference>
<comment type="function">
    <text evidence="1">Catalyzes the reversible conversion of ribose-5-phosphate to ribulose 5-phosphate.</text>
</comment>
<comment type="catalytic activity">
    <reaction evidence="1">
        <text>aldehydo-D-ribose 5-phosphate = D-ribulose 5-phosphate</text>
        <dbReference type="Rhea" id="RHEA:14657"/>
        <dbReference type="ChEBI" id="CHEBI:58121"/>
        <dbReference type="ChEBI" id="CHEBI:58273"/>
        <dbReference type="EC" id="5.3.1.6"/>
    </reaction>
</comment>
<comment type="pathway">
    <text evidence="1">Carbohydrate degradation; pentose phosphate pathway; D-ribose 5-phosphate from D-ribulose 5-phosphate (non-oxidative stage): step 1/1.</text>
</comment>
<comment type="subunit">
    <text evidence="1">Homodimer.</text>
</comment>
<comment type="similarity">
    <text evidence="1">Belongs to the ribose 5-phosphate isomerase family.</text>
</comment>
<feature type="chain" id="PRO_1000017012" description="Ribose-5-phosphate isomerase A">
    <location>
        <begin position="1"/>
        <end position="227"/>
    </location>
</feature>
<feature type="active site" description="Proton acceptor" evidence="1">
    <location>
        <position position="104"/>
    </location>
</feature>
<feature type="binding site" evidence="1">
    <location>
        <begin position="26"/>
        <end position="29"/>
    </location>
    <ligand>
        <name>substrate</name>
    </ligand>
</feature>
<feature type="binding site" evidence="1">
    <location>
        <begin position="82"/>
        <end position="85"/>
    </location>
    <ligand>
        <name>substrate</name>
    </ligand>
</feature>
<feature type="binding site" evidence="1">
    <location>
        <begin position="95"/>
        <end position="98"/>
    </location>
    <ligand>
        <name>substrate</name>
    </ligand>
</feature>
<feature type="binding site" evidence="1">
    <location>
        <position position="122"/>
    </location>
    <ligand>
        <name>substrate</name>
    </ligand>
</feature>
<evidence type="ECO:0000255" key="1">
    <source>
        <dbReference type="HAMAP-Rule" id="MF_00170"/>
    </source>
</evidence>
<keyword id="KW-0413">Isomerase</keyword>
<name>RPIA_STRPG</name>
<accession>A2RF13</accession>
<organism>
    <name type="scientific">Streptococcus pyogenes serotype M5 (strain Manfredo)</name>
    <dbReference type="NCBI Taxonomy" id="160491"/>
    <lineage>
        <taxon>Bacteria</taxon>
        <taxon>Bacillati</taxon>
        <taxon>Bacillota</taxon>
        <taxon>Bacilli</taxon>
        <taxon>Lactobacillales</taxon>
        <taxon>Streptococcaceae</taxon>
        <taxon>Streptococcus</taxon>
    </lineage>
</organism>
<proteinExistence type="inferred from homology"/>
<protein>
    <recommendedName>
        <fullName evidence="1">Ribose-5-phosphate isomerase A</fullName>
        <ecNumber evidence="1">5.3.1.6</ecNumber>
    </recommendedName>
    <alternativeName>
        <fullName evidence="1">Phosphoriboisomerase A</fullName>
        <shortName evidence="1">PRI</shortName>
    </alternativeName>
</protein>